<dbReference type="EC" id="6.1.1.16" evidence="1"/>
<dbReference type="EMBL" id="CP000360">
    <property type="protein sequence ID" value="ABF42992.1"/>
    <property type="molecule type" value="Genomic_DNA"/>
</dbReference>
<dbReference type="RefSeq" id="WP_011524791.1">
    <property type="nucleotide sequence ID" value="NC_008009.1"/>
</dbReference>
<dbReference type="SMR" id="Q1IJF8"/>
<dbReference type="STRING" id="204669.Acid345_3992"/>
<dbReference type="EnsemblBacteria" id="ABF42992">
    <property type="protein sequence ID" value="ABF42992"/>
    <property type="gene ID" value="Acid345_3992"/>
</dbReference>
<dbReference type="KEGG" id="aba:Acid345_3992"/>
<dbReference type="eggNOG" id="COG0215">
    <property type="taxonomic scope" value="Bacteria"/>
</dbReference>
<dbReference type="HOGENOM" id="CLU_013528_0_1_0"/>
<dbReference type="OrthoDB" id="9815130at2"/>
<dbReference type="Proteomes" id="UP000002432">
    <property type="component" value="Chromosome"/>
</dbReference>
<dbReference type="GO" id="GO:0005829">
    <property type="term" value="C:cytosol"/>
    <property type="evidence" value="ECO:0007669"/>
    <property type="project" value="TreeGrafter"/>
</dbReference>
<dbReference type="GO" id="GO:0005524">
    <property type="term" value="F:ATP binding"/>
    <property type="evidence" value="ECO:0007669"/>
    <property type="project" value="UniProtKB-UniRule"/>
</dbReference>
<dbReference type="GO" id="GO:0004817">
    <property type="term" value="F:cysteine-tRNA ligase activity"/>
    <property type="evidence" value="ECO:0007669"/>
    <property type="project" value="UniProtKB-UniRule"/>
</dbReference>
<dbReference type="GO" id="GO:0008270">
    <property type="term" value="F:zinc ion binding"/>
    <property type="evidence" value="ECO:0007669"/>
    <property type="project" value="UniProtKB-UniRule"/>
</dbReference>
<dbReference type="GO" id="GO:0006423">
    <property type="term" value="P:cysteinyl-tRNA aminoacylation"/>
    <property type="evidence" value="ECO:0007669"/>
    <property type="project" value="UniProtKB-UniRule"/>
</dbReference>
<dbReference type="CDD" id="cd00672">
    <property type="entry name" value="CysRS_core"/>
    <property type="match status" value="1"/>
</dbReference>
<dbReference type="FunFam" id="3.40.50.620:FF:000130">
    <property type="entry name" value="Cysteine--tRNA ligase"/>
    <property type="match status" value="1"/>
</dbReference>
<dbReference type="Gene3D" id="1.20.120.1910">
    <property type="entry name" value="Cysteine-tRNA ligase, C-terminal anti-codon recognition domain"/>
    <property type="match status" value="1"/>
</dbReference>
<dbReference type="Gene3D" id="3.40.50.620">
    <property type="entry name" value="HUPs"/>
    <property type="match status" value="1"/>
</dbReference>
<dbReference type="HAMAP" id="MF_00041">
    <property type="entry name" value="Cys_tRNA_synth"/>
    <property type="match status" value="1"/>
</dbReference>
<dbReference type="InterPro" id="IPR015803">
    <property type="entry name" value="Cys-tRNA-ligase"/>
</dbReference>
<dbReference type="InterPro" id="IPR015273">
    <property type="entry name" value="Cys-tRNA-synt_Ia_DALR"/>
</dbReference>
<dbReference type="InterPro" id="IPR024909">
    <property type="entry name" value="Cys-tRNA/MSH_ligase"/>
</dbReference>
<dbReference type="InterPro" id="IPR014729">
    <property type="entry name" value="Rossmann-like_a/b/a_fold"/>
</dbReference>
<dbReference type="InterPro" id="IPR032678">
    <property type="entry name" value="tRNA-synt_1_cat_dom"/>
</dbReference>
<dbReference type="InterPro" id="IPR009080">
    <property type="entry name" value="tRNAsynth_Ia_anticodon-bd"/>
</dbReference>
<dbReference type="NCBIfam" id="TIGR00435">
    <property type="entry name" value="cysS"/>
    <property type="match status" value="1"/>
</dbReference>
<dbReference type="PANTHER" id="PTHR10890:SF3">
    <property type="entry name" value="CYSTEINE--TRNA LIGASE, CYTOPLASMIC"/>
    <property type="match status" value="1"/>
</dbReference>
<dbReference type="PANTHER" id="PTHR10890">
    <property type="entry name" value="CYSTEINYL-TRNA SYNTHETASE"/>
    <property type="match status" value="1"/>
</dbReference>
<dbReference type="Pfam" id="PF09190">
    <property type="entry name" value="DALR_2"/>
    <property type="match status" value="1"/>
</dbReference>
<dbReference type="Pfam" id="PF01406">
    <property type="entry name" value="tRNA-synt_1e"/>
    <property type="match status" value="1"/>
</dbReference>
<dbReference type="PRINTS" id="PR00983">
    <property type="entry name" value="TRNASYNTHCYS"/>
</dbReference>
<dbReference type="SMART" id="SM00840">
    <property type="entry name" value="DALR_2"/>
    <property type="match status" value="1"/>
</dbReference>
<dbReference type="SUPFAM" id="SSF47323">
    <property type="entry name" value="Anticodon-binding domain of a subclass of class I aminoacyl-tRNA synthetases"/>
    <property type="match status" value="1"/>
</dbReference>
<dbReference type="SUPFAM" id="SSF52374">
    <property type="entry name" value="Nucleotidylyl transferase"/>
    <property type="match status" value="1"/>
</dbReference>
<evidence type="ECO:0000255" key="1">
    <source>
        <dbReference type="HAMAP-Rule" id="MF_00041"/>
    </source>
</evidence>
<reference key="1">
    <citation type="journal article" date="2009" name="Appl. Environ. Microbiol.">
        <title>Three genomes from the phylum Acidobacteria provide insight into the lifestyles of these microorganisms in soils.</title>
        <authorList>
            <person name="Ward N.L."/>
            <person name="Challacombe J.F."/>
            <person name="Janssen P.H."/>
            <person name="Henrissat B."/>
            <person name="Coutinho P.M."/>
            <person name="Wu M."/>
            <person name="Xie G."/>
            <person name="Haft D.H."/>
            <person name="Sait M."/>
            <person name="Badger J."/>
            <person name="Barabote R.D."/>
            <person name="Bradley B."/>
            <person name="Brettin T.S."/>
            <person name="Brinkac L.M."/>
            <person name="Bruce D."/>
            <person name="Creasy T."/>
            <person name="Daugherty S.C."/>
            <person name="Davidsen T.M."/>
            <person name="DeBoy R.T."/>
            <person name="Detter J.C."/>
            <person name="Dodson R.J."/>
            <person name="Durkin A.S."/>
            <person name="Ganapathy A."/>
            <person name="Gwinn-Giglio M."/>
            <person name="Han C.S."/>
            <person name="Khouri H."/>
            <person name="Kiss H."/>
            <person name="Kothari S.P."/>
            <person name="Madupu R."/>
            <person name="Nelson K.E."/>
            <person name="Nelson W.C."/>
            <person name="Paulsen I."/>
            <person name="Penn K."/>
            <person name="Ren Q."/>
            <person name="Rosovitz M.J."/>
            <person name="Selengut J.D."/>
            <person name="Shrivastava S."/>
            <person name="Sullivan S.A."/>
            <person name="Tapia R."/>
            <person name="Thompson L.S."/>
            <person name="Watkins K.L."/>
            <person name="Yang Q."/>
            <person name="Yu C."/>
            <person name="Zafar N."/>
            <person name="Zhou L."/>
            <person name="Kuske C.R."/>
        </authorList>
    </citation>
    <scope>NUCLEOTIDE SEQUENCE [LARGE SCALE GENOMIC DNA]</scope>
    <source>
        <strain>Ellin345</strain>
    </source>
</reference>
<organism>
    <name type="scientific">Koribacter versatilis (strain Ellin345)</name>
    <dbReference type="NCBI Taxonomy" id="204669"/>
    <lineage>
        <taxon>Bacteria</taxon>
        <taxon>Pseudomonadati</taxon>
        <taxon>Acidobacteriota</taxon>
        <taxon>Terriglobia</taxon>
        <taxon>Terriglobales</taxon>
        <taxon>Candidatus Korobacteraceae</taxon>
        <taxon>Candidatus Korobacter</taxon>
    </lineage>
</organism>
<feature type="chain" id="PRO_1000006558" description="Cysteine--tRNA ligase">
    <location>
        <begin position="1"/>
        <end position="495"/>
    </location>
</feature>
<feature type="short sequence motif" description="'HIGH' region">
    <location>
        <begin position="31"/>
        <end position="41"/>
    </location>
</feature>
<feature type="short sequence motif" description="'KMSKS' region">
    <location>
        <begin position="268"/>
        <end position="272"/>
    </location>
</feature>
<feature type="binding site" evidence="1">
    <location>
        <position position="29"/>
    </location>
    <ligand>
        <name>Zn(2+)</name>
        <dbReference type="ChEBI" id="CHEBI:29105"/>
    </ligand>
</feature>
<feature type="binding site" evidence="1">
    <location>
        <position position="211"/>
    </location>
    <ligand>
        <name>Zn(2+)</name>
        <dbReference type="ChEBI" id="CHEBI:29105"/>
    </ligand>
</feature>
<feature type="binding site" evidence="1">
    <location>
        <position position="236"/>
    </location>
    <ligand>
        <name>Zn(2+)</name>
        <dbReference type="ChEBI" id="CHEBI:29105"/>
    </ligand>
</feature>
<feature type="binding site" evidence="1">
    <location>
        <position position="240"/>
    </location>
    <ligand>
        <name>Zn(2+)</name>
        <dbReference type="ChEBI" id="CHEBI:29105"/>
    </ligand>
</feature>
<feature type="binding site" evidence="1">
    <location>
        <position position="271"/>
    </location>
    <ligand>
        <name>ATP</name>
        <dbReference type="ChEBI" id="CHEBI:30616"/>
    </ligand>
</feature>
<protein>
    <recommendedName>
        <fullName evidence="1">Cysteine--tRNA ligase</fullName>
        <ecNumber evidence="1">6.1.1.16</ecNumber>
    </recommendedName>
    <alternativeName>
        <fullName evidence="1">Cysteinyl-tRNA synthetase</fullName>
        <shortName evidence="1">CysRS</shortName>
    </alternativeName>
</protein>
<keyword id="KW-0030">Aminoacyl-tRNA synthetase</keyword>
<keyword id="KW-0067">ATP-binding</keyword>
<keyword id="KW-0963">Cytoplasm</keyword>
<keyword id="KW-0436">Ligase</keyword>
<keyword id="KW-0479">Metal-binding</keyword>
<keyword id="KW-0547">Nucleotide-binding</keyword>
<keyword id="KW-0648">Protein biosynthesis</keyword>
<keyword id="KW-1185">Reference proteome</keyword>
<keyword id="KW-0862">Zinc</keyword>
<name>SYC_KORVE</name>
<proteinExistence type="inferred from homology"/>
<sequence>MALELFNTLSGKIETFQPLEDNEVRMYACGPTVYDYGHIGNFRTFIVVDTLRRFLKQSGYKLKHVMNVTDVDDKIIRNAARDGKTVQEYTAKYRKAFLEDCEALNIEHPELLVNATDHIDEMARFIKRMEDLDVAYKTEDGSYYFRIAKFPEYGKLSKKDFAGMNDGARVDVDEYEKDNARDFALWKAPKPGEAKWDTVIGSGRPGWHIECSIMSMKYLGESFDIHLGGEDLVFPHHENEIAQSESVTHKKFANFWVHSRFLLVEGQKMSKSLGNFFTVRDLILMGHKPSSIRFLLMSVPYRKQLNFTFDGLKQAAISVDRLRNFKRRIQTEPFAEGTNDKIGLMANETITKIKAALDNDLNTAEALAPIFDLVRDVNAAADAGEVKRGDVASLLEALQKFDEIFAVLNDDDSGKVKFAVDWANQEGKADKISAETAEMAKAAGLSDEKVEALVAEHSAARKAKDFKRSDAIRAELMESGIILENTKDGVRWKRK</sequence>
<gene>
    <name evidence="1" type="primary">cysS</name>
    <name type="ordered locus">Acid345_3992</name>
</gene>
<accession>Q1IJF8</accession>
<comment type="catalytic activity">
    <reaction evidence="1">
        <text>tRNA(Cys) + L-cysteine + ATP = L-cysteinyl-tRNA(Cys) + AMP + diphosphate</text>
        <dbReference type="Rhea" id="RHEA:17773"/>
        <dbReference type="Rhea" id="RHEA-COMP:9661"/>
        <dbReference type="Rhea" id="RHEA-COMP:9679"/>
        <dbReference type="ChEBI" id="CHEBI:30616"/>
        <dbReference type="ChEBI" id="CHEBI:33019"/>
        <dbReference type="ChEBI" id="CHEBI:35235"/>
        <dbReference type="ChEBI" id="CHEBI:78442"/>
        <dbReference type="ChEBI" id="CHEBI:78517"/>
        <dbReference type="ChEBI" id="CHEBI:456215"/>
        <dbReference type="EC" id="6.1.1.16"/>
    </reaction>
</comment>
<comment type="cofactor">
    <cofactor evidence="1">
        <name>Zn(2+)</name>
        <dbReference type="ChEBI" id="CHEBI:29105"/>
    </cofactor>
    <text evidence="1">Binds 1 zinc ion per subunit.</text>
</comment>
<comment type="subunit">
    <text evidence="1">Monomer.</text>
</comment>
<comment type="subcellular location">
    <subcellularLocation>
        <location evidence="1">Cytoplasm</location>
    </subcellularLocation>
</comment>
<comment type="similarity">
    <text evidence="1">Belongs to the class-I aminoacyl-tRNA synthetase family.</text>
</comment>